<gene>
    <name type="primary">alr</name>
    <name type="ordered locus">Pnap_0131</name>
</gene>
<sequence>MPRPILATIHLAALSHNLARVRTAAPDAKVWAVVKANAYGHGIERVFDALRSADGFALLDLDEARRLRALDWRGPILLLEGCFEARDLELCSRLGLWHTIHCQEQIDMLAAHKTQLPHRVFLKMNTGMNRLGFTPERFRAAWIRLNALPQVDEISLMQHFPDADGPKGITAQLQAFDAVTHDLPGERTLSNSAAILRHTGALAGRSDWVRPGIVLYGSAPDFPEHSASDWELQPTMTLSSRIIGLQTLAAGDTVGYGSSFVAEGPMRIGVVACGYADGYPRHCPTGTPVLVNGVRTRMVGRVSMDMITVDLTPVPRAGMGSEVTLWGRASKGGAMLPIDEVARAAGTVGYELMCAVAPRVPVAVD</sequence>
<comment type="function">
    <text evidence="1">Catalyzes the interconversion of L-alanine and D-alanine. May also act on other amino acids.</text>
</comment>
<comment type="catalytic activity">
    <reaction evidence="1">
        <text>L-alanine = D-alanine</text>
        <dbReference type="Rhea" id="RHEA:20249"/>
        <dbReference type="ChEBI" id="CHEBI:57416"/>
        <dbReference type="ChEBI" id="CHEBI:57972"/>
        <dbReference type="EC" id="5.1.1.1"/>
    </reaction>
</comment>
<comment type="cofactor">
    <cofactor evidence="1">
        <name>pyridoxal 5'-phosphate</name>
        <dbReference type="ChEBI" id="CHEBI:597326"/>
    </cofactor>
</comment>
<comment type="pathway">
    <text evidence="1">Amino-acid biosynthesis; D-alanine biosynthesis; D-alanine from L-alanine: step 1/1.</text>
</comment>
<comment type="similarity">
    <text evidence="1">Belongs to the alanine racemase family.</text>
</comment>
<feature type="chain" id="PRO_1000066023" description="Alanine racemase">
    <location>
        <begin position="1"/>
        <end position="365"/>
    </location>
</feature>
<feature type="active site" description="Proton acceptor; specific for D-alanine" evidence="1">
    <location>
        <position position="35"/>
    </location>
</feature>
<feature type="active site" description="Proton acceptor; specific for L-alanine" evidence="1">
    <location>
        <position position="256"/>
    </location>
</feature>
<feature type="binding site" evidence="1">
    <location>
        <position position="130"/>
    </location>
    <ligand>
        <name>substrate</name>
    </ligand>
</feature>
<feature type="binding site" evidence="1">
    <location>
        <position position="304"/>
    </location>
    <ligand>
        <name>substrate</name>
    </ligand>
</feature>
<feature type="modified residue" description="N6-(pyridoxal phosphate)lysine" evidence="1">
    <location>
        <position position="35"/>
    </location>
</feature>
<keyword id="KW-0413">Isomerase</keyword>
<keyword id="KW-0663">Pyridoxal phosphate</keyword>
<keyword id="KW-1185">Reference proteome</keyword>
<name>ALR_POLNA</name>
<evidence type="ECO:0000255" key="1">
    <source>
        <dbReference type="HAMAP-Rule" id="MF_01201"/>
    </source>
</evidence>
<dbReference type="EC" id="5.1.1.1" evidence="1"/>
<dbReference type="EMBL" id="CP000529">
    <property type="protein sequence ID" value="ABM35456.1"/>
    <property type="molecule type" value="Genomic_DNA"/>
</dbReference>
<dbReference type="RefSeq" id="WP_011799566.1">
    <property type="nucleotide sequence ID" value="NC_008781.1"/>
</dbReference>
<dbReference type="SMR" id="A1VIH8"/>
<dbReference type="STRING" id="365044.Pnap_0131"/>
<dbReference type="KEGG" id="pna:Pnap_0131"/>
<dbReference type="eggNOG" id="COG0787">
    <property type="taxonomic scope" value="Bacteria"/>
</dbReference>
<dbReference type="HOGENOM" id="CLU_028393_1_0_4"/>
<dbReference type="OrthoDB" id="9813814at2"/>
<dbReference type="UniPathway" id="UPA00042">
    <property type="reaction ID" value="UER00497"/>
</dbReference>
<dbReference type="Proteomes" id="UP000000644">
    <property type="component" value="Chromosome"/>
</dbReference>
<dbReference type="GO" id="GO:0005829">
    <property type="term" value="C:cytosol"/>
    <property type="evidence" value="ECO:0007669"/>
    <property type="project" value="TreeGrafter"/>
</dbReference>
<dbReference type="GO" id="GO:0008784">
    <property type="term" value="F:alanine racemase activity"/>
    <property type="evidence" value="ECO:0007669"/>
    <property type="project" value="UniProtKB-UniRule"/>
</dbReference>
<dbReference type="GO" id="GO:0030170">
    <property type="term" value="F:pyridoxal phosphate binding"/>
    <property type="evidence" value="ECO:0007669"/>
    <property type="project" value="UniProtKB-UniRule"/>
</dbReference>
<dbReference type="GO" id="GO:0030632">
    <property type="term" value="P:D-alanine biosynthetic process"/>
    <property type="evidence" value="ECO:0007669"/>
    <property type="project" value="UniProtKB-UniRule"/>
</dbReference>
<dbReference type="CDD" id="cd06827">
    <property type="entry name" value="PLPDE_III_AR_proteobact"/>
    <property type="match status" value="1"/>
</dbReference>
<dbReference type="FunFam" id="3.20.20.10:FF:000002">
    <property type="entry name" value="Alanine racemase"/>
    <property type="match status" value="1"/>
</dbReference>
<dbReference type="Gene3D" id="3.20.20.10">
    <property type="entry name" value="Alanine racemase"/>
    <property type="match status" value="1"/>
</dbReference>
<dbReference type="Gene3D" id="2.40.37.10">
    <property type="entry name" value="Lyase, Ornithine Decarboxylase, Chain A, domain 1"/>
    <property type="match status" value="1"/>
</dbReference>
<dbReference type="HAMAP" id="MF_01201">
    <property type="entry name" value="Ala_racemase"/>
    <property type="match status" value="1"/>
</dbReference>
<dbReference type="InterPro" id="IPR000821">
    <property type="entry name" value="Ala_racemase"/>
</dbReference>
<dbReference type="InterPro" id="IPR009006">
    <property type="entry name" value="Ala_racemase/Decarboxylase_C"/>
</dbReference>
<dbReference type="InterPro" id="IPR011079">
    <property type="entry name" value="Ala_racemase_C"/>
</dbReference>
<dbReference type="InterPro" id="IPR001608">
    <property type="entry name" value="Ala_racemase_N"/>
</dbReference>
<dbReference type="InterPro" id="IPR020622">
    <property type="entry name" value="Ala_racemase_pyridoxalP-BS"/>
</dbReference>
<dbReference type="InterPro" id="IPR029066">
    <property type="entry name" value="PLP-binding_barrel"/>
</dbReference>
<dbReference type="NCBIfam" id="TIGR00492">
    <property type="entry name" value="alr"/>
    <property type="match status" value="1"/>
</dbReference>
<dbReference type="PANTHER" id="PTHR30511">
    <property type="entry name" value="ALANINE RACEMASE"/>
    <property type="match status" value="1"/>
</dbReference>
<dbReference type="PANTHER" id="PTHR30511:SF0">
    <property type="entry name" value="ALANINE RACEMASE, CATABOLIC-RELATED"/>
    <property type="match status" value="1"/>
</dbReference>
<dbReference type="Pfam" id="PF00842">
    <property type="entry name" value="Ala_racemase_C"/>
    <property type="match status" value="1"/>
</dbReference>
<dbReference type="Pfam" id="PF01168">
    <property type="entry name" value="Ala_racemase_N"/>
    <property type="match status" value="1"/>
</dbReference>
<dbReference type="PRINTS" id="PR00992">
    <property type="entry name" value="ALARACEMASE"/>
</dbReference>
<dbReference type="SMART" id="SM01005">
    <property type="entry name" value="Ala_racemase_C"/>
    <property type="match status" value="1"/>
</dbReference>
<dbReference type="SUPFAM" id="SSF50621">
    <property type="entry name" value="Alanine racemase C-terminal domain-like"/>
    <property type="match status" value="1"/>
</dbReference>
<dbReference type="SUPFAM" id="SSF51419">
    <property type="entry name" value="PLP-binding barrel"/>
    <property type="match status" value="1"/>
</dbReference>
<dbReference type="PROSITE" id="PS00395">
    <property type="entry name" value="ALANINE_RACEMASE"/>
    <property type="match status" value="1"/>
</dbReference>
<proteinExistence type="inferred from homology"/>
<protein>
    <recommendedName>
        <fullName evidence="1">Alanine racemase</fullName>
        <ecNumber evidence="1">5.1.1.1</ecNumber>
    </recommendedName>
</protein>
<accession>A1VIH8</accession>
<reference key="1">
    <citation type="journal article" date="2009" name="Environ. Microbiol.">
        <title>The genome of Polaromonas naphthalenivorans strain CJ2, isolated from coal tar-contaminated sediment, reveals physiological and metabolic versatility and evolution through extensive horizontal gene transfer.</title>
        <authorList>
            <person name="Yagi J.M."/>
            <person name="Sims D."/>
            <person name="Brettin T."/>
            <person name="Bruce D."/>
            <person name="Madsen E.L."/>
        </authorList>
    </citation>
    <scope>NUCLEOTIDE SEQUENCE [LARGE SCALE GENOMIC DNA]</scope>
    <source>
        <strain>CJ2</strain>
    </source>
</reference>
<organism>
    <name type="scientific">Polaromonas naphthalenivorans (strain CJ2)</name>
    <dbReference type="NCBI Taxonomy" id="365044"/>
    <lineage>
        <taxon>Bacteria</taxon>
        <taxon>Pseudomonadati</taxon>
        <taxon>Pseudomonadota</taxon>
        <taxon>Betaproteobacteria</taxon>
        <taxon>Burkholderiales</taxon>
        <taxon>Comamonadaceae</taxon>
        <taxon>Polaromonas</taxon>
    </lineage>
</organism>